<name>PYRE_BACTN</name>
<dbReference type="EC" id="2.4.2.10" evidence="1"/>
<dbReference type="EMBL" id="AE015928">
    <property type="protein sequence ID" value="AAO78836.1"/>
    <property type="molecule type" value="Genomic_DNA"/>
</dbReference>
<dbReference type="RefSeq" id="NP_812642.1">
    <property type="nucleotide sequence ID" value="NC_004663.1"/>
</dbReference>
<dbReference type="RefSeq" id="WP_008762667.1">
    <property type="nucleotide sequence ID" value="NZ_UYXG01000004.1"/>
</dbReference>
<dbReference type="SMR" id="Q8A1D5"/>
<dbReference type="FunCoup" id="Q8A1D5">
    <property type="interactions" value="466"/>
</dbReference>
<dbReference type="STRING" id="226186.BT_3731"/>
<dbReference type="PaxDb" id="226186-BT_3731"/>
<dbReference type="EnsemblBacteria" id="AAO78836">
    <property type="protein sequence ID" value="AAO78836"/>
    <property type="gene ID" value="BT_3731"/>
</dbReference>
<dbReference type="GeneID" id="60924900"/>
<dbReference type="KEGG" id="bth:BT_3731"/>
<dbReference type="PATRIC" id="fig|226186.12.peg.3792"/>
<dbReference type="eggNOG" id="COG0461">
    <property type="taxonomic scope" value="Bacteria"/>
</dbReference>
<dbReference type="HOGENOM" id="CLU_074878_1_1_10"/>
<dbReference type="InParanoid" id="Q8A1D5"/>
<dbReference type="OrthoDB" id="9802134at2"/>
<dbReference type="UniPathway" id="UPA00070">
    <property type="reaction ID" value="UER00119"/>
</dbReference>
<dbReference type="Proteomes" id="UP000001414">
    <property type="component" value="Chromosome"/>
</dbReference>
<dbReference type="GO" id="GO:0000287">
    <property type="term" value="F:magnesium ion binding"/>
    <property type="evidence" value="ECO:0007669"/>
    <property type="project" value="UniProtKB-UniRule"/>
</dbReference>
<dbReference type="GO" id="GO:0004588">
    <property type="term" value="F:orotate phosphoribosyltransferase activity"/>
    <property type="evidence" value="ECO:0000318"/>
    <property type="project" value="GO_Central"/>
</dbReference>
<dbReference type="GO" id="GO:0044205">
    <property type="term" value="P:'de novo' UMP biosynthetic process"/>
    <property type="evidence" value="ECO:0007669"/>
    <property type="project" value="UniProtKB-UniRule"/>
</dbReference>
<dbReference type="GO" id="GO:0019856">
    <property type="term" value="P:pyrimidine nucleobase biosynthetic process"/>
    <property type="evidence" value="ECO:0000318"/>
    <property type="project" value="GO_Central"/>
</dbReference>
<dbReference type="GO" id="GO:0006222">
    <property type="term" value="P:UMP biosynthetic process"/>
    <property type="evidence" value="ECO:0000318"/>
    <property type="project" value="GO_Central"/>
</dbReference>
<dbReference type="CDD" id="cd06223">
    <property type="entry name" value="PRTases_typeI"/>
    <property type="match status" value="1"/>
</dbReference>
<dbReference type="Gene3D" id="3.40.50.2020">
    <property type="match status" value="1"/>
</dbReference>
<dbReference type="HAMAP" id="MF_01208">
    <property type="entry name" value="PyrE"/>
    <property type="match status" value="1"/>
</dbReference>
<dbReference type="InterPro" id="IPR023031">
    <property type="entry name" value="OPRT"/>
</dbReference>
<dbReference type="InterPro" id="IPR004467">
    <property type="entry name" value="Or_phspho_trans_dom"/>
</dbReference>
<dbReference type="InterPro" id="IPR000836">
    <property type="entry name" value="PRibTrfase_dom"/>
</dbReference>
<dbReference type="InterPro" id="IPR029057">
    <property type="entry name" value="PRTase-like"/>
</dbReference>
<dbReference type="NCBIfam" id="TIGR00336">
    <property type="entry name" value="pyrE"/>
    <property type="match status" value="1"/>
</dbReference>
<dbReference type="PANTHER" id="PTHR19278">
    <property type="entry name" value="OROTATE PHOSPHORIBOSYLTRANSFERASE"/>
    <property type="match status" value="1"/>
</dbReference>
<dbReference type="PANTHER" id="PTHR19278:SF9">
    <property type="entry name" value="URIDINE 5'-MONOPHOSPHATE SYNTHASE"/>
    <property type="match status" value="1"/>
</dbReference>
<dbReference type="Pfam" id="PF00156">
    <property type="entry name" value="Pribosyltran"/>
    <property type="match status" value="1"/>
</dbReference>
<dbReference type="SUPFAM" id="SSF53271">
    <property type="entry name" value="PRTase-like"/>
    <property type="match status" value="1"/>
</dbReference>
<dbReference type="PROSITE" id="PS00103">
    <property type="entry name" value="PUR_PYR_PR_TRANSFER"/>
    <property type="match status" value="1"/>
</dbReference>
<reference key="1">
    <citation type="journal article" date="2003" name="Science">
        <title>A genomic view of the human-Bacteroides thetaiotaomicron symbiosis.</title>
        <authorList>
            <person name="Xu J."/>
            <person name="Bjursell M.K."/>
            <person name="Himrod J."/>
            <person name="Deng S."/>
            <person name="Carmichael L.K."/>
            <person name="Chiang H.C."/>
            <person name="Hooper L.V."/>
            <person name="Gordon J.I."/>
        </authorList>
    </citation>
    <scope>NUCLEOTIDE SEQUENCE [LARGE SCALE GENOMIC DNA]</scope>
    <source>
        <strain>ATCC 29148 / DSM 2079 / JCM 5827 / CCUG 10774 / NCTC 10582 / VPI-5482 / E50</strain>
    </source>
</reference>
<accession>Q8A1D5</accession>
<evidence type="ECO:0000255" key="1">
    <source>
        <dbReference type="HAMAP-Rule" id="MF_01208"/>
    </source>
</evidence>
<proteinExistence type="inferred from homology"/>
<protein>
    <recommendedName>
        <fullName evidence="1">Orotate phosphoribosyltransferase</fullName>
        <shortName evidence="1">OPRT</shortName>
        <shortName evidence="1">OPRTase</shortName>
        <ecNumber evidence="1">2.4.2.10</ecNumber>
    </recommendedName>
</protein>
<organism>
    <name type="scientific">Bacteroides thetaiotaomicron (strain ATCC 29148 / DSM 2079 / JCM 5827 / CCUG 10774 / NCTC 10582 / VPI-5482 / E50)</name>
    <dbReference type="NCBI Taxonomy" id="226186"/>
    <lineage>
        <taxon>Bacteria</taxon>
        <taxon>Pseudomonadati</taxon>
        <taxon>Bacteroidota</taxon>
        <taxon>Bacteroidia</taxon>
        <taxon>Bacteroidales</taxon>
        <taxon>Bacteroidaceae</taxon>
        <taxon>Bacteroides</taxon>
    </lineage>
</organism>
<gene>
    <name evidence="1" type="primary">pyrE</name>
    <name type="ordered locus">BT_3731</name>
</gene>
<comment type="function">
    <text evidence="1">Catalyzes the transfer of a ribosyl phosphate group from 5-phosphoribose 1-diphosphate to orotate, leading to the formation of orotidine monophosphate (OMP).</text>
</comment>
<comment type="catalytic activity">
    <reaction evidence="1">
        <text>orotidine 5'-phosphate + diphosphate = orotate + 5-phospho-alpha-D-ribose 1-diphosphate</text>
        <dbReference type="Rhea" id="RHEA:10380"/>
        <dbReference type="ChEBI" id="CHEBI:30839"/>
        <dbReference type="ChEBI" id="CHEBI:33019"/>
        <dbReference type="ChEBI" id="CHEBI:57538"/>
        <dbReference type="ChEBI" id="CHEBI:58017"/>
        <dbReference type="EC" id="2.4.2.10"/>
    </reaction>
</comment>
<comment type="cofactor">
    <cofactor evidence="1">
        <name>Mg(2+)</name>
        <dbReference type="ChEBI" id="CHEBI:18420"/>
    </cofactor>
</comment>
<comment type="pathway">
    <text evidence="1">Pyrimidine metabolism; UMP biosynthesis via de novo pathway; UMP from orotate: step 1/2.</text>
</comment>
<comment type="subunit">
    <text evidence="1">Homodimer.</text>
</comment>
<comment type="similarity">
    <text evidence="1">Belongs to the purine/pyrimidine phosphoribosyltransferase family. PyrE subfamily.</text>
</comment>
<sequence>MKNLERLFAEKLLKIKAIKLQPANPFTWASGWKSPFYCDNRKTLSYPSLRNFVKIEITRLILERFGQVDAIAGVATGAIPQGALVADALNLPFVYVRSTPKDHGLENLIEGELRPGMKVVVVEDLISTGGSSLKAVEAIRRDGCEVIGMVAAYTYGFPVAEEAFKNAKVPLVTLTNYEAVLDVALRTGYIEEEDIATLNDWRKDPAHWDAGK</sequence>
<keyword id="KW-0328">Glycosyltransferase</keyword>
<keyword id="KW-0460">Magnesium</keyword>
<keyword id="KW-0665">Pyrimidine biosynthesis</keyword>
<keyword id="KW-1185">Reference proteome</keyword>
<keyword id="KW-0808">Transferase</keyword>
<feature type="chain" id="PRO_0000110673" description="Orotate phosphoribosyltransferase">
    <location>
        <begin position="1"/>
        <end position="212"/>
    </location>
</feature>
<feature type="binding site" evidence="1">
    <location>
        <position position="97"/>
    </location>
    <ligand>
        <name>5-phospho-alpha-D-ribose 1-diphosphate</name>
        <dbReference type="ChEBI" id="CHEBI:58017"/>
        <note>ligand shared between dimeric partners</note>
    </ligand>
</feature>
<feature type="binding site" evidence="1">
    <location>
        <position position="101"/>
    </location>
    <ligand>
        <name>5-phospho-alpha-D-ribose 1-diphosphate</name>
        <dbReference type="ChEBI" id="CHEBI:58017"/>
        <note>ligand shared between dimeric partners</note>
    </ligand>
</feature>
<feature type="binding site" evidence="1">
    <location>
        <position position="103"/>
    </location>
    <ligand>
        <name>5-phospho-alpha-D-ribose 1-diphosphate</name>
        <dbReference type="ChEBI" id="CHEBI:58017"/>
        <note>ligand shared between dimeric partners</note>
    </ligand>
</feature>
<feature type="binding site" description="in other chain" evidence="1">
    <location>
        <begin position="123"/>
        <end position="131"/>
    </location>
    <ligand>
        <name>5-phospho-alpha-D-ribose 1-diphosphate</name>
        <dbReference type="ChEBI" id="CHEBI:58017"/>
        <note>ligand shared between dimeric partners</note>
    </ligand>
</feature>
<feature type="binding site" evidence="1">
    <location>
        <position position="127"/>
    </location>
    <ligand>
        <name>orotate</name>
        <dbReference type="ChEBI" id="CHEBI:30839"/>
    </ligand>
</feature>